<accession>A8GMY5</accession>
<gene>
    <name evidence="1" type="primary">hisS</name>
    <name type="ordered locus">A1C_02295</name>
</gene>
<organism>
    <name type="scientific">Rickettsia akari (strain Hartford)</name>
    <dbReference type="NCBI Taxonomy" id="293614"/>
    <lineage>
        <taxon>Bacteria</taxon>
        <taxon>Pseudomonadati</taxon>
        <taxon>Pseudomonadota</taxon>
        <taxon>Alphaproteobacteria</taxon>
        <taxon>Rickettsiales</taxon>
        <taxon>Rickettsiaceae</taxon>
        <taxon>Rickettsieae</taxon>
        <taxon>Rickettsia</taxon>
        <taxon>spotted fever group</taxon>
    </lineage>
</organism>
<comment type="catalytic activity">
    <reaction evidence="1">
        <text>tRNA(His) + L-histidine + ATP = L-histidyl-tRNA(His) + AMP + diphosphate + H(+)</text>
        <dbReference type="Rhea" id="RHEA:17313"/>
        <dbReference type="Rhea" id="RHEA-COMP:9665"/>
        <dbReference type="Rhea" id="RHEA-COMP:9689"/>
        <dbReference type="ChEBI" id="CHEBI:15378"/>
        <dbReference type="ChEBI" id="CHEBI:30616"/>
        <dbReference type="ChEBI" id="CHEBI:33019"/>
        <dbReference type="ChEBI" id="CHEBI:57595"/>
        <dbReference type="ChEBI" id="CHEBI:78442"/>
        <dbReference type="ChEBI" id="CHEBI:78527"/>
        <dbReference type="ChEBI" id="CHEBI:456215"/>
        <dbReference type="EC" id="6.1.1.21"/>
    </reaction>
</comment>
<comment type="subunit">
    <text evidence="1">Homodimer.</text>
</comment>
<comment type="subcellular location">
    <subcellularLocation>
        <location evidence="1">Cytoplasm</location>
    </subcellularLocation>
</comment>
<comment type="similarity">
    <text evidence="1">Belongs to the class-II aminoacyl-tRNA synthetase family.</text>
</comment>
<feature type="chain" id="PRO_1000016435" description="Histidine--tRNA ligase">
    <location>
        <begin position="1"/>
        <end position="415"/>
    </location>
</feature>
<keyword id="KW-0030">Aminoacyl-tRNA synthetase</keyword>
<keyword id="KW-0067">ATP-binding</keyword>
<keyword id="KW-0963">Cytoplasm</keyword>
<keyword id="KW-0436">Ligase</keyword>
<keyword id="KW-0547">Nucleotide-binding</keyword>
<keyword id="KW-0648">Protein biosynthesis</keyword>
<name>SYH_RICAH</name>
<dbReference type="EC" id="6.1.1.21" evidence="1"/>
<dbReference type="EMBL" id="CP000847">
    <property type="protein sequence ID" value="ABV74760.1"/>
    <property type="molecule type" value="Genomic_DNA"/>
</dbReference>
<dbReference type="RefSeq" id="WP_012149394.1">
    <property type="nucleotide sequence ID" value="NC_009881.1"/>
</dbReference>
<dbReference type="SMR" id="A8GMY5"/>
<dbReference type="STRING" id="293614.A1C_02295"/>
<dbReference type="KEGG" id="rak:A1C_02295"/>
<dbReference type="eggNOG" id="COG0124">
    <property type="taxonomic scope" value="Bacteria"/>
</dbReference>
<dbReference type="HOGENOM" id="CLU_025113_1_0_5"/>
<dbReference type="Proteomes" id="UP000006830">
    <property type="component" value="Chromosome"/>
</dbReference>
<dbReference type="GO" id="GO:0005737">
    <property type="term" value="C:cytoplasm"/>
    <property type="evidence" value="ECO:0007669"/>
    <property type="project" value="UniProtKB-SubCell"/>
</dbReference>
<dbReference type="GO" id="GO:0005524">
    <property type="term" value="F:ATP binding"/>
    <property type="evidence" value="ECO:0007669"/>
    <property type="project" value="UniProtKB-UniRule"/>
</dbReference>
<dbReference type="GO" id="GO:0004821">
    <property type="term" value="F:histidine-tRNA ligase activity"/>
    <property type="evidence" value="ECO:0007669"/>
    <property type="project" value="UniProtKB-UniRule"/>
</dbReference>
<dbReference type="GO" id="GO:0006427">
    <property type="term" value="P:histidyl-tRNA aminoacylation"/>
    <property type="evidence" value="ECO:0007669"/>
    <property type="project" value="UniProtKB-UniRule"/>
</dbReference>
<dbReference type="CDD" id="cd00773">
    <property type="entry name" value="HisRS-like_core"/>
    <property type="match status" value="1"/>
</dbReference>
<dbReference type="CDD" id="cd00859">
    <property type="entry name" value="HisRS_anticodon"/>
    <property type="match status" value="1"/>
</dbReference>
<dbReference type="Gene3D" id="3.40.50.800">
    <property type="entry name" value="Anticodon-binding domain"/>
    <property type="match status" value="1"/>
</dbReference>
<dbReference type="Gene3D" id="3.30.930.10">
    <property type="entry name" value="Bira Bifunctional Protein, Domain 2"/>
    <property type="match status" value="1"/>
</dbReference>
<dbReference type="HAMAP" id="MF_00127">
    <property type="entry name" value="His_tRNA_synth"/>
    <property type="match status" value="1"/>
</dbReference>
<dbReference type="InterPro" id="IPR006195">
    <property type="entry name" value="aa-tRNA-synth_II"/>
</dbReference>
<dbReference type="InterPro" id="IPR045864">
    <property type="entry name" value="aa-tRNA-synth_II/BPL/LPL"/>
</dbReference>
<dbReference type="InterPro" id="IPR004154">
    <property type="entry name" value="Anticodon-bd"/>
</dbReference>
<dbReference type="InterPro" id="IPR036621">
    <property type="entry name" value="Anticodon-bd_dom_sf"/>
</dbReference>
<dbReference type="InterPro" id="IPR015807">
    <property type="entry name" value="His-tRNA-ligase"/>
</dbReference>
<dbReference type="InterPro" id="IPR041715">
    <property type="entry name" value="HisRS-like_core"/>
</dbReference>
<dbReference type="InterPro" id="IPR004516">
    <property type="entry name" value="HisRS/HisZ"/>
</dbReference>
<dbReference type="InterPro" id="IPR033656">
    <property type="entry name" value="HisRS_anticodon"/>
</dbReference>
<dbReference type="NCBIfam" id="TIGR00442">
    <property type="entry name" value="hisS"/>
    <property type="match status" value="1"/>
</dbReference>
<dbReference type="PANTHER" id="PTHR43707:SF1">
    <property type="entry name" value="HISTIDINE--TRNA LIGASE, MITOCHONDRIAL-RELATED"/>
    <property type="match status" value="1"/>
</dbReference>
<dbReference type="PANTHER" id="PTHR43707">
    <property type="entry name" value="HISTIDYL-TRNA SYNTHETASE"/>
    <property type="match status" value="1"/>
</dbReference>
<dbReference type="Pfam" id="PF03129">
    <property type="entry name" value="HGTP_anticodon"/>
    <property type="match status" value="1"/>
</dbReference>
<dbReference type="Pfam" id="PF13393">
    <property type="entry name" value="tRNA-synt_His"/>
    <property type="match status" value="1"/>
</dbReference>
<dbReference type="PIRSF" id="PIRSF001549">
    <property type="entry name" value="His-tRNA_synth"/>
    <property type="match status" value="1"/>
</dbReference>
<dbReference type="SUPFAM" id="SSF52954">
    <property type="entry name" value="Class II aaRS ABD-related"/>
    <property type="match status" value="1"/>
</dbReference>
<dbReference type="SUPFAM" id="SSF55681">
    <property type="entry name" value="Class II aaRS and biotin synthetases"/>
    <property type="match status" value="1"/>
</dbReference>
<dbReference type="PROSITE" id="PS50862">
    <property type="entry name" value="AA_TRNA_LIGASE_II"/>
    <property type="match status" value="1"/>
</dbReference>
<reference key="1">
    <citation type="submission" date="2007-09" db="EMBL/GenBank/DDBJ databases">
        <title>Complete genome sequence of Rickettsia akari.</title>
        <authorList>
            <person name="Madan A."/>
            <person name="Fahey J."/>
            <person name="Helton E."/>
            <person name="Ketteman M."/>
            <person name="Madan A."/>
            <person name="Rodrigues S."/>
            <person name="Sanchez A."/>
            <person name="Whiting M."/>
            <person name="Dasch G."/>
            <person name="Eremeeva M."/>
        </authorList>
    </citation>
    <scope>NUCLEOTIDE SEQUENCE [LARGE SCALE GENOMIC DNA]</scope>
    <source>
        <strain>Hartford</strain>
    </source>
</reference>
<proteinExistence type="inferred from homology"/>
<sequence>MTEKLQPLRGIKDLLPDDYKVHDYIISKARDVGVLYGYKQMSTPILEYTKVFNRSMGESSDVISKEIYSFLDKSNESVALRPEFTAGIIRSFISNGLQHKLPLKLFSTGPVFRYDRPQAGRQRQFHQLNYEYIGAKGAITDAETLKLAIDILKALAIEQDTLLELNSLGCSESRSAYKQKLVEYLSDFKDQLSEESKIRMIKNPMRILDSKSEIDQKIVAYAPILSEYYTDESKEYFDELIKYLDILGVKYSINPRLVRGLDYYCHTAFEFTTNKLGSQSTILAGGRYDGLSRIMGNNDDVPAIGFAAGIERIALMREYDISEVKPVFVLPIGDNNITYALEIVDKLRAQNIATIVEPLGKIAKRMQRVLNENAKFIIFIGDEEQENNSIKLKDLEKQEEYIVDFAKAFELLKKY</sequence>
<evidence type="ECO:0000255" key="1">
    <source>
        <dbReference type="HAMAP-Rule" id="MF_00127"/>
    </source>
</evidence>
<protein>
    <recommendedName>
        <fullName evidence="1">Histidine--tRNA ligase</fullName>
        <ecNumber evidence="1">6.1.1.21</ecNumber>
    </recommendedName>
    <alternativeName>
        <fullName evidence="1">Histidyl-tRNA synthetase</fullName>
        <shortName evidence="1">HisRS</shortName>
    </alternativeName>
</protein>